<keyword id="KW-0067">ATP-binding</keyword>
<keyword id="KW-0418">Kinase</keyword>
<keyword id="KW-0460">Magnesium</keyword>
<keyword id="KW-0479">Metal-binding</keyword>
<keyword id="KW-0547">Nucleotide-binding</keyword>
<keyword id="KW-0711">Selenium</keyword>
<keyword id="KW-0808">Transferase</keyword>
<feature type="chain" id="PRO_1000051604" description="Selenide, water dikinase">
    <location>
        <begin position="1"/>
        <end position="352"/>
    </location>
</feature>
<feature type="active site" evidence="1">
    <location>
        <position position="23"/>
    </location>
</feature>
<feature type="binding site" description="in other chain" evidence="1">
    <location>
        <position position="26"/>
    </location>
    <ligand>
        <name>ATP</name>
        <dbReference type="ChEBI" id="CHEBI:30616"/>
        <note>ligand shared between dimeric partners</note>
    </ligand>
</feature>
<feature type="binding site" description="in other chain" evidence="1">
    <location>
        <begin position="54"/>
        <end position="56"/>
    </location>
    <ligand>
        <name>ATP</name>
        <dbReference type="ChEBI" id="CHEBI:30616"/>
        <note>ligand shared between dimeric partners</note>
    </ligand>
</feature>
<feature type="binding site" evidence="1">
    <location>
        <position position="57"/>
    </location>
    <ligand>
        <name>Mg(2+)</name>
        <dbReference type="ChEBI" id="CHEBI:18420"/>
    </ligand>
</feature>
<feature type="binding site" description="in other chain" evidence="1">
    <location>
        <position position="74"/>
    </location>
    <ligand>
        <name>ATP</name>
        <dbReference type="ChEBI" id="CHEBI:30616"/>
        <note>ligand shared between dimeric partners</note>
    </ligand>
</feature>
<feature type="binding site" description="in other chain" evidence="1">
    <location>
        <position position="97"/>
    </location>
    <ligand>
        <name>ATP</name>
        <dbReference type="ChEBI" id="CHEBI:30616"/>
        <note>ligand shared between dimeric partners</note>
    </ligand>
</feature>
<feature type="binding site" evidence="1">
    <location>
        <position position="97"/>
    </location>
    <ligand>
        <name>Mg(2+)</name>
        <dbReference type="ChEBI" id="CHEBI:18420"/>
    </ligand>
</feature>
<feature type="binding site" evidence="1">
    <location>
        <begin position="145"/>
        <end position="147"/>
    </location>
    <ligand>
        <name>ATP</name>
        <dbReference type="ChEBI" id="CHEBI:30616"/>
        <note>ligand shared between dimeric partners</note>
    </ligand>
</feature>
<feature type="binding site" evidence="1">
    <location>
        <position position="233"/>
    </location>
    <ligand>
        <name>Mg(2+)</name>
        <dbReference type="ChEBI" id="CHEBI:18420"/>
    </ligand>
</feature>
<feature type="site" description="Important for catalytic activity" evidence="1">
    <location>
        <position position="26"/>
    </location>
</feature>
<gene>
    <name evidence="1" type="primary">selD</name>
    <name type="ordered locus">Shewana3_0176</name>
</gene>
<name>SELD_SHESA</name>
<comment type="function">
    <text evidence="1">Synthesizes selenophosphate from selenide and ATP.</text>
</comment>
<comment type="catalytic activity">
    <reaction evidence="1">
        <text>hydrogenselenide + ATP + H2O = selenophosphate + AMP + phosphate + 2 H(+)</text>
        <dbReference type="Rhea" id="RHEA:18737"/>
        <dbReference type="ChEBI" id="CHEBI:15377"/>
        <dbReference type="ChEBI" id="CHEBI:15378"/>
        <dbReference type="ChEBI" id="CHEBI:16144"/>
        <dbReference type="ChEBI" id="CHEBI:29317"/>
        <dbReference type="ChEBI" id="CHEBI:30616"/>
        <dbReference type="ChEBI" id="CHEBI:43474"/>
        <dbReference type="ChEBI" id="CHEBI:456215"/>
        <dbReference type="EC" id="2.7.9.3"/>
    </reaction>
</comment>
<comment type="cofactor">
    <cofactor evidence="1">
        <name>Mg(2+)</name>
        <dbReference type="ChEBI" id="CHEBI:18420"/>
    </cofactor>
    <text evidence="1">Binds 1 Mg(2+) ion per monomer.</text>
</comment>
<comment type="subunit">
    <text evidence="1">Homodimer.</text>
</comment>
<comment type="similarity">
    <text evidence="1">Belongs to the selenophosphate synthase 1 family. Class I subfamily.</text>
</comment>
<dbReference type="EC" id="2.7.9.3" evidence="1"/>
<dbReference type="EMBL" id="CP000469">
    <property type="protein sequence ID" value="ABK46420.1"/>
    <property type="molecule type" value="Genomic_DNA"/>
</dbReference>
<dbReference type="RefSeq" id="WP_011715445.1">
    <property type="nucleotide sequence ID" value="NC_008577.1"/>
</dbReference>
<dbReference type="SMR" id="A0KRK1"/>
<dbReference type="STRING" id="94122.Shewana3_0176"/>
<dbReference type="KEGG" id="shn:Shewana3_0176"/>
<dbReference type="eggNOG" id="COG0709">
    <property type="taxonomic scope" value="Bacteria"/>
</dbReference>
<dbReference type="HOGENOM" id="CLU_032859_0_1_6"/>
<dbReference type="OrthoDB" id="9767928at2"/>
<dbReference type="Proteomes" id="UP000002589">
    <property type="component" value="Chromosome"/>
</dbReference>
<dbReference type="GO" id="GO:0005737">
    <property type="term" value="C:cytoplasm"/>
    <property type="evidence" value="ECO:0007669"/>
    <property type="project" value="TreeGrafter"/>
</dbReference>
<dbReference type="GO" id="GO:0005524">
    <property type="term" value="F:ATP binding"/>
    <property type="evidence" value="ECO:0007669"/>
    <property type="project" value="UniProtKB-UniRule"/>
</dbReference>
<dbReference type="GO" id="GO:0000287">
    <property type="term" value="F:magnesium ion binding"/>
    <property type="evidence" value="ECO:0007669"/>
    <property type="project" value="UniProtKB-UniRule"/>
</dbReference>
<dbReference type="GO" id="GO:0004756">
    <property type="term" value="F:selenide, water dikinase activity"/>
    <property type="evidence" value="ECO:0007669"/>
    <property type="project" value="UniProtKB-UniRule"/>
</dbReference>
<dbReference type="GO" id="GO:0016260">
    <property type="term" value="P:selenocysteine biosynthetic process"/>
    <property type="evidence" value="ECO:0007669"/>
    <property type="project" value="InterPro"/>
</dbReference>
<dbReference type="CDD" id="cd02195">
    <property type="entry name" value="SelD"/>
    <property type="match status" value="1"/>
</dbReference>
<dbReference type="FunFam" id="3.30.1330.10:FF:000003">
    <property type="entry name" value="Selenide, water dikinase"/>
    <property type="match status" value="1"/>
</dbReference>
<dbReference type="FunFam" id="3.90.650.10:FF:000004">
    <property type="entry name" value="Selenide, water dikinase"/>
    <property type="match status" value="1"/>
</dbReference>
<dbReference type="Gene3D" id="3.90.650.10">
    <property type="entry name" value="PurM-like C-terminal domain"/>
    <property type="match status" value="1"/>
</dbReference>
<dbReference type="Gene3D" id="3.30.1330.10">
    <property type="entry name" value="PurM-like, N-terminal domain"/>
    <property type="match status" value="1"/>
</dbReference>
<dbReference type="HAMAP" id="MF_00625">
    <property type="entry name" value="SelD"/>
    <property type="match status" value="1"/>
</dbReference>
<dbReference type="InterPro" id="IPR010918">
    <property type="entry name" value="PurM-like_C_dom"/>
</dbReference>
<dbReference type="InterPro" id="IPR036676">
    <property type="entry name" value="PurM-like_C_sf"/>
</dbReference>
<dbReference type="InterPro" id="IPR016188">
    <property type="entry name" value="PurM-like_N"/>
</dbReference>
<dbReference type="InterPro" id="IPR036921">
    <property type="entry name" value="PurM-like_N_sf"/>
</dbReference>
<dbReference type="InterPro" id="IPR023061">
    <property type="entry name" value="SelD_I"/>
</dbReference>
<dbReference type="InterPro" id="IPR004536">
    <property type="entry name" value="SPS/SelD"/>
</dbReference>
<dbReference type="NCBIfam" id="NF002098">
    <property type="entry name" value="PRK00943.1"/>
    <property type="match status" value="1"/>
</dbReference>
<dbReference type="NCBIfam" id="TIGR00476">
    <property type="entry name" value="selD"/>
    <property type="match status" value="1"/>
</dbReference>
<dbReference type="PANTHER" id="PTHR10256:SF0">
    <property type="entry name" value="INACTIVE SELENIDE, WATER DIKINASE-LIKE PROTEIN-RELATED"/>
    <property type="match status" value="1"/>
</dbReference>
<dbReference type="PANTHER" id="PTHR10256">
    <property type="entry name" value="SELENIDE, WATER DIKINASE"/>
    <property type="match status" value="1"/>
</dbReference>
<dbReference type="Pfam" id="PF00586">
    <property type="entry name" value="AIRS"/>
    <property type="match status" value="1"/>
</dbReference>
<dbReference type="Pfam" id="PF02769">
    <property type="entry name" value="AIRS_C"/>
    <property type="match status" value="1"/>
</dbReference>
<dbReference type="PIRSF" id="PIRSF036407">
    <property type="entry name" value="Selenphspht_syn"/>
    <property type="match status" value="1"/>
</dbReference>
<dbReference type="SUPFAM" id="SSF56042">
    <property type="entry name" value="PurM C-terminal domain-like"/>
    <property type="match status" value="1"/>
</dbReference>
<dbReference type="SUPFAM" id="SSF55326">
    <property type="entry name" value="PurM N-terminal domain-like"/>
    <property type="match status" value="1"/>
</dbReference>
<evidence type="ECO:0000255" key="1">
    <source>
        <dbReference type="HAMAP-Rule" id="MF_00625"/>
    </source>
</evidence>
<reference key="1">
    <citation type="submission" date="2006-09" db="EMBL/GenBank/DDBJ databases">
        <title>Complete sequence of chromosome 1 of Shewanella sp. ANA-3.</title>
        <authorList>
            <person name="Copeland A."/>
            <person name="Lucas S."/>
            <person name="Lapidus A."/>
            <person name="Barry K."/>
            <person name="Detter J.C."/>
            <person name="Glavina del Rio T."/>
            <person name="Hammon N."/>
            <person name="Israni S."/>
            <person name="Dalin E."/>
            <person name="Tice H."/>
            <person name="Pitluck S."/>
            <person name="Chertkov O."/>
            <person name="Brettin T."/>
            <person name="Bruce D."/>
            <person name="Han C."/>
            <person name="Tapia R."/>
            <person name="Gilna P."/>
            <person name="Schmutz J."/>
            <person name="Larimer F."/>
            <person name="Land M."/>
            <person name="Hauser L."/>
            <person name="Kyrpides N."/>
            <person name="Kim E."/>
            <person name="Newman D."/>
            <person name="Salticov C."/>
            <person name="Konstantinidis K."/>
            <person name="Klappenback J."/>
            <person name="Tiedje J."/>
            <person name="Richardson P."/>
        </authorList>
    </citation>
    <scope>NUCLEOTIDE SEQUENCE [LARGE SCALE GENOMIC DNA]</scope>
    <source>
        <strain>ANA-3</strain>
    </source>
</reference>
<proteinExistence type="inferred from homology"/>
<protein>
    <recommendedName>
        <fullName evidence="1">Selenide, water dikinase</fullName>
        <ecNumber evidence="1">2.7.9.3</ecNumber>
    </recommendedName>
    <alternativeName>
        <fullName evidence="1">Selenium donor protein</fullName>
    </alternativeName>
    <alternativeName>
        <fullName evidence="1">Selenophosphate synthase</fullName>
    </alternativeName>
</protein>
<organism>
    <name type="scientific">Shewanella sp. (strain ANA-3)</name>
    <dbReference type="NCBI Taxonomy" id="94122"/>
    <lineage>
        <taxon>Bacteria</taxon>
        <taxon>Pseudomonadati</taxon>
        <taxon>Pseudomonadota</taxon>
        <taxon>Gammaproteobacteria</taxon>
        <taxon>Alteromonadales</taxon>
        <taxon>Shewanellaceae</taxon>
        <taxon>Shewanella</taxon>
    </lineage>
</organism>
<sequence length="352" mass="36909">MSNSAVSSADSIKLTEYSHGAGCGCKISPKVLTTILASQLPVFTDPNLLVGNQSRDDAAVYKLNDEIGIISTTDFFMPIVDDPFTFGRIAATNAISDIYAMGGTPMMAIAILGWPVNKLPAEIAQQVVDGGRQACMEAGIMLAGGHSIDAPEPIFGLAVTGQIALTDLKQNDTAKADDRLYLTKPIGIGILTTAQKQKKLKDEDSQIAVNAMCQLNSIGAKIAKIKGVNALTDVTGFGLAGHLLEVCQGAKLTAKLNLDAVPLLPRALDYLAQGCIPGGTHRNYDSYGEHLPTLTDHQKAILCDPQTSGGLLVAVSSEAEAELVALLNAHQIEPICIGSLETPTSTANVVLC</sequence>
<accession>A0KRK1</accession>